<feature type="signal peptide" evidence="7">
    <location>
        <begin position="1" status="less than"/>
        <end position="14"/>
    </location>
</feature>
<feature type="propeptide" id="PRO_0000380635" evidence="1">
    <location>
        <begin position="15"/>
        <end position="22"/>
    </location>
</feature>
<feature type="chain" id="PRO_0000380636" description="Dermonecrotic toxin LiSicTox-alphaIA2bii">
    <location>
        <begin position="23"/>
        <end position="302"/>
    </location>
</feature>
<feature type="active site" evidence="6">
    <location>
        <position position="34"/>
    </location>
</feature>
<feature type="active site" description="Nucleophile" evidence="6">
    <location>
        <position position="70"/>
    </location>
</feature>
<feature type="binding site" evidence="6">
    <location>
        <position position="54"/>
    </location>
    <ligand>
        <name>Mg(2+)</name>
        <dbReference type="ChEBI" id="CHEBI:18420"/>
    </ligand>
</feature>
<feature type="binding site" evidence="6">
    <location>
        <position position="56"/>
    </location>
    <ligand>
        <name>Mg(2+)</name>
        <dbReference type="ChEBI" id="CHEBI:18420"/>
    </ligand>
</feature>
<feature type="binding site" evidence="6">
    <location>
        <position position="114"/>
    </location>
    <ligand>
        <name>Mg(2+)</name>
        <dbReference type="ChEBI" id="CHEBI:18420"/>
    </ligand>
</feature>
<feature type="glycosylation site" description="N-linked (GlcNAc...) asparagine" evidence="7">
    <location>
        <position position="279"/>
    </location>
</feature>
<feature type="disulfide bond" evidence="4">
    <location>
        <begin position="74"/>
        <end position="80"/>
    </location>
</feature>
<feature type="disulfide bond" evidence="4">
    <location>
        <begin position="76"/>
        <end position="219"/>
    </location>
</feature>
<feature type="non-terminal residue">
    <location>
        <position position="1"/>
    </location>
</feature>
<dbReference type="EC" id="4.6.1.-" evidence="5"/>
<dbReference type="EMBL" id="EF535251">
    <property type="protein sequence ID" value="ABU43330.1"/>
    <property type="molecule type" value="mRNA"/>
</dbReference>
<dbReference type="SMR" id="B2KKV7"/>
<dbReference type="ArachnoServer" id="AS000693">
    <property type="toxin name" value="Sphingomyelinase D (LiSicTox-alphaIA2bii)"/>
</dbReference>
<dbReference type="GO" id="GO:0005576">
    <property type="term" value="C:extracellular region"/>
    <property type="evidence" value="ECO:0007669"/>
    <property type="project" value="UniProtKB-SubCell"/>
</dbReference>
<dbReference type="GO" id="GO:0016829">
    <property type="term" value="F:lyase activity"/>
    <property type="evidence" value="ECO:0007669"/>
    <property type="project" value="UniProtKB-KW"/>
</dbReference>
<dbReference type="GO" id="GO:0046872">
    <property type="term" value="F:metal ion binding"/>
    <property type="evidence" value="ECO:0007669"/>
    <property type="project" value="UniProtKB-KW"/>
</dbReference>
<dbReference type="GO" id="GO:0008081">
    <property type="term" value="F:phosphoric diester hydrolase activity"/>
    <property type="evidence" value="ECO:0007669"/>
    <property type="project" value="InterPro"/>
</dbReference>
<dbReference type="GO" id="GO:0090729">
    <property type="term" value="F:toxin activity"/>
    <property type="evidence" value="ECO:0007669"/>
    <property type="project" value="UniProtKB-KW"/>
</dbReference>
<dbReference type="GO" id="GO:0031640">
    <property type="term" value="P:killing of cells of another organism"/>
    <property type="evidence" value="ECO:0007669"/>
    <property type="project" value="UniProtKB-KW"/>
</dbReference>
<dbReference type="GO" id="GO:0016042">
    <property type="term" value="P:lipid catabolic process"/>
    <property type="evidence" value="ECO:0007669"/>
    <property type="project" value="UniProtKB-KW"/>
</dbReference>
<dbReference type="CDD" id="cd08576">
    <property type="entry name" value="GDPD_like_SMaseD_PLD"/>
    <property type="match status" value="1"/>
</dbReference>
<dbReference type="Gene3D" id="3.20.20.190">
    <property type="entry name" value="Phosphatidylinositol (PI) phosphodiesterase"/>
    <property type="match status" value="1"/>
</dbReference>
<dbReference type="InterPro" id="IPR017946">
    <property type="entry name" value="PLC-like_Pdiesterase_TIM-brl"/>
</dbReference>
<dbReference type="Pfam" id="PF13653">
    <property type="entry name" value="GDPD_2"/>
    <property type="match status" value="1"/>
</dbReference>
<dbReference type="SUPFAM" id="SSF51695">
    <property type="entry name" value="PLC-like phosphodiesterases"/>
    <property type="match status" value="1"/>
</dbReference>
<keyword id="KW-0204">Cytolysis</keyword>
<keyword id="KW-1061">Dermonecrotic toxin</keyword>
<keyword id="KW-1015">Disulfide bond</keyword>
<keyword id="KW-0325">Glycoprotein</keyword>
<keyword id="KW-0354">Hemolysis</keyword>
<keyword id="KW-0442">Lipid degradation</keyword>
<keyword id="KW-0443">Lipid metabolism</keyword>
<keyword id="KW-0456">Lyase</keyword>
<keyword id="KW-0460">Magnesium</keyword>
<keyword id="KW-0479">Metal-binding</keyword>
<keyword id="KW-0964">Secreted</keyword>
<keyword id="KW-0732">Signal</keyword>
<keyword id="KW-0800">Toxin</keyword>
<keyword id="KW-0865">Zymogen</keyword>
<accession>B2KKV7</accession>
<evidence type="ECO:0000250" key="1"/>
<evidence type="ECO:0000250" key="2">
    <source>
        <dbReference type="UniProtKB" id="A0A0D4WTV1"/>
    </source>
</evidence>
<evidence type="ECO:0000250" key="3">
    <source>
        <dbReference type="UniProtKB" id="A0A0D4WV12"/>
    </source>
</evidence>
<evidence type="ECO:0000250" key="4">
    <source>
        <dbReference type="UniProtKB" id="P0CE80"/>
    </source>
</evidence>
<evidence type="ECO:0000250" key="5">
    <source>
        <dbReference type="UniProtKB" id="Q4ZFU2"/>
    </source>
</evidence>
<evidence type="ECO:0000250" key="6">
    <source>
        <dbReference type="UniProtKB" id="Q8I914"/>
    </source>
</evidence>
<evidence type="ECO:0000255" key="7"/>
<evidence type="ECO:0000305" key="8"/>
<evidence type="ECO:0000305" key="9">
    <source>
    </source>
</evidence>
<comment type="function">
    <text evidence="2 4">Dermonecrotic toxins cleave the phosphodiester linkage between the phosphate and headgroup of certain phospholipids (sphingolipid and lysolipid substrates), forming an alcohol (often choline) and a cyclic phosphate (By similarity). This toxin acts on sphingomyelin (SM) (By similarity). It may also act on ceramide phosphoethanolamine (CPE), lysophosphatidylcholine (LPC) and lysophosphatidylethanolamine (LPE), but not on lysophosphatidylserine (LPS), and lysophosphatidylglycerol (LPG) (By similarity). It acts by transphosphatidylation, releasing exclusively cyclic phosphate products as second products (By similarity). Induces dermonecrosis, hemolysis, increased vascular permeability, edema, inflammatory response, and platelet aggregation (By similarity).</text>
</comment>
<comment type="catalytic activity">
    <reaction evidence="2">
        <text>an N-(acyl)-sphingosylphosphocholine = an N-(acyl)-sphingosyl-1,3-cyclic phosphate + choline</text>
        <dbReference type="Rhea" id="RHEA:60652"/>
        <dbReference type="ChEBI" id="CHEBI:15354"/>
        <dbReference type="ChEBI" id="CHEBI:64583"/>
        <dbReference type="ChEBI" id="CHEBI:143892"/>
    </reaction>
</comment>
<comment type="catalytic activity">
    <reaction evidence="2">
        <text>an N-(acyl)-sphingosylphosphoethanolamine = an N-(acyl)-sphingosyl-1,3-cyclic phosphate + ethanolamine</text>
        <dbReference type="Rhea" id="RHEA:60648"/>
        <dbReference type="ChEBI" id="CHEBI:57603"/>
        <dbReference type="ChEBI" id="CHEBI:143891"/>
        <dbReference type="ChEBI" id="CHEBI:143892"/>
    </reaction>
</comment>
<comment type="catalytic activity">
    <reaction evidence="2">
        <text>a 1-acyl-sn-glycero-3-phosphocholine = a 1-acyl-sn-glycero-2,3-cyclic phosphate + choline</text>
        <dbReference type="Rhea" id="RHEA:60700"/>
        <dbReference type="ChEBI" id="CHEBI:15354"/>
        <dbReference type="ChEBI" id="CHEBI:58168"/>
        <dbReference type="ChEBI" id="CHEBI:143947"/>
    </reaction>
</comment>
<comment type="catalytic activity">
    <reaction evidence="2">
        <text>a 1-acyl-sn-glycero-3-phosphoethanolamine = a 1-acyl-sn-glycero-2,3-cyclic phosphate + ethanolamine</text>
        <dbReference type="Rhea" id="RHEA:60704"/>
        <dbReference type="ChEBI" id="CHEBI:57603"/>
        <dbReference type="ChEBI" id="CHEBI:64381"/>
        <dbReference type="ChEBI" id="CHEBI:143947"/>
    </reaction>
</comment>
<comment type="cofactor">
    <cofactor evidence="6">
        <name>Mg(2+)</name>
        <dbReference type="ChEBI" id="CHEBI:18420"/>
    </cofactor>
    <text evidence="6">Binds 1 Mg(2+) ion per subunit.</text>
</comment>
<comment type="subcellular location">
    <subcellularLocation>
        <location evidence="9">Secreted</location>
    </subcellularLocation>
</comment>
<comment type="tissue specificity">
    <text evidence="9">Expressed by the venom gland.</text>
</comment>
<comment type="similarity">
    <text evidence="8">Belongs to the arthropod phospholipase D family. Class II subfamily.</text>
</comment>
<comment type="caution">
    <text evidence="2 3 5">The most common activity assay for dermonecrotic toxins detects enzymatic activity by monitoring choline release from substrate. Liberation of choline from sphingomyelin (SM) or lysophosphatidylcholine (LPC) is commonly assumed to result from substrate hydrolysis, giving either ceramide-1-phosphate (C1P) or lysophosphatidic acid (LPA), respectively, as a second product. However, two studies from Lajoie and colleagues (2013 and 2015) report the observation of exclusive formation of cyclic phosphate products as second products, resulting from intramolecular transphosphatidylation. Cyclic phosphates have vastly different biological properties from their monoester counterparts, and they may be relevant to the pathology of brown spider envenomation.</text>
</comment>
<organism>
    <name type="scientific">Loxosceles intermedia</name>
    <name type="common">Brown spider</name>
    <dbReference type="NCBI Taxonomy" id="58218"/>
    <lineage>
        <taxon>Eukaryota</taxon>
        <taxon>Metazoa</taxon>
        <taxon>Ecdysozoa</taxon>
        <taxon>Arthropoda</taxon>
        <taxon>Chelicerata</taxon>
        <taxon>Arachnida</taxon>
        <taxon>Araneae</taxon>
        <taxon>Araneomorphae</taxon>
        <taxon>Haplogynae</taxon>
        <taxon>Scytodoidea</taxon>
        <taxon>Sicariidae</taxon>
        <taxon>Loxosceles</taxon>
    </lineage>
</organism>
<reference key="1">
    <citation type="journal article" date="2007" name="Toxicon">
        <title>The Loxtox protein family in Loxosceles intermedia (Mello-Leitao) venom.</title>
        <authorList>
            <person name="Kalapothakis E."/>
            <person name="Chatzaki M."/>
            <person name="Goncalves-Dornelas H."/>
            <person name="de Castro C.S."/>
            <person name="Silvestre F.G."/>
            <person name="Laborne F.V."/>
            <person name="de Moura J.F."/>
            <person name="Veiga S.S."/>
            <person name="Chavez-Olortegui C."/>
            <person name="Granier C."/>
            <person name="Barbaro K.C."/>
        </authorList>
    </citation>
    <scope>NUCLEOTIDE SEQUENCE [MRNA]</scope>
    <source>
        <tissue>Venom gland</tissue>
    </source>
</reference>
<proteinExistence type="evidence at transcript level"/>
<sequence length="302" mass="33627">IALILVCWSVLSQAAQTDVEGRADKRRPIWIMGHMVNAIAQIDEFVNLGANSIETDVSFDDNANPEYTYHGVPCDCGRSCLKWENFNDFLKGLRSATTPGNAKYQAKLILVVFDLKTGSLYDNQANEAGKKLAKNLLKHYWNNGNNGGRAYIVLSIPDLNHYPLIKGFKDQLTHDGHPELMDKVGHDFSGNDAIGDVGNAYKKAGISGHVWQSDGITNCLLRGLDRVKQAIANRDSGNGFINKVYYWTVDKRATTRDALDAGVDGVMTNYPDVITDVLNESAYKNKFRVASYEDNPWETFKK</sequence>
<protein>
    <recommendedName>
        <fullName>Dermonecrotic toxin LiSicTox-alphaIA2bii</fullName>
        <ecNumber evidence="5">4.6.1.-</ecNumber>
    </recommendedName>
    <alternativeName>
        <fullName>Loxtox i2</fullName>
    </alternativeName>
    <alternativeName>
        <fullName>Phospholipase D</fullName>
        <shortName>PLD</shortName>
    </alternativeName>
    <alternativeName>
        <fullName>Sphingomyelin phosphodiesterase D</fullName>
        <shortName>SMD</shortName>
        <shortName>SMase D</shortName>
        <shortName>Sphingomyelinase D</shortName>
    </alternativeName>
</protein>
<name>A1IB2_LOXIN</name>